<comment type="function">
    <text evidence="1">Produces ATP from ADP in the presence of a proton gradient across the membrane.</text>
</comment>
<comment type="subunit">
    <text evidence="1">F-type ATPases have 2 components, CF(1) - the catalytic core - and CF(0) - the membrane proton channel. CF(1) has five subunits: alpha(3), beta(3), gamma(1), delta(1), epsilon(1). CF(0) has three main subunits: a, b and c.</text>
</comment>
<comment type="subcellular location">
    <subcellularLocation>
        <location evidence="1">Plastid</location>
        <location evidence="1">Chloroplast thylakoid membrane</location>
        <topology evidence="1">Peripheral membrane protein</topology>
    </subcellularLocation>
</comment>
<comment type="similarity">
    <text evidence="1">Belongs to the ATPase epsilon chain family.</text>
</comment>
<name>ATPE_ORYSA</name>
<evidence type="ECO:0000255" key="1">
    <source>
        <dbReference type="HAMAP-Rule" id="MF_00530"/>
    </source>
</evidence>
<dbReference type="EMBL" id="AY522331">
    <property type="protein sequence ID" value="AAS46189.1"/>
    <property type="molecule type" value="Genomic_DNA"/>
</dbReference>
<dbReference type="RefSeq" id="NP_039389.1">
    <property type="nucleotide sequence ID" value="NC_001320.1"/>
</dbReference>
<dbReference type="RefSeq" id="YP_009305310.1">
    <property type="nucleotide sequence ID" value="NC_031333.1"/>
</dbReference>
<dbReference type="SMR" id="P0C2Z1"/>
<dbReference type="GeneID" id="29141376"/>
<dbReference type="GeneID" id="3131461"/>
<dbReference type="KEGG" id="osa:3131461"/>
<dbReference type="GO" id="GO:0009535">
    <property type="term" value="C:chloroplast thylakoid membrane"/>
    <property type="evidence" value="ECO:0007669"/>
    <property type="project" value="UniProtKB-SubCell"/>
</dbReference>
<dbReference type="GO" id="GO:0009536">
    <property type="term" value="C:plastid"/>
    <property type="evidence" value="ECO:0000305"/>
    <property type="project" value="Gramene"/>
</dbReference>
<dbReference type="GO" id="GO:0045259">
    <property type="term" value="C:proton-transporting ATP synthase complex"/>
    <property type="evidence" value="ECO:0007669"/>
    <property type="project" value="UniProtKB-KW"/>
</dbReference>
<dbReference type="GO" id="GO:0005524">
    <property type="term" value="F:ATP binding"/>
    <property type="evidence" value="ECO:0007669"/>
    <property type="project" value="UniProtKB-UniRule"/>
</dbReference>
<dbReference type="GO" id="GO:0046933">
    <property type="term" value="F:proton-transporting ATP synthase activity, rotational mechanism"/>
    <property type="evidence" value="ECO:0007669"/>
    <property type="project" value="UniProtKB-UniRule"/>
</dbReference>
<dbReference type="CDD" id="cd12152">
    <property type="entry name" value="F1-ATPase_delta"/>
    <property type="match status" value="1"/>
</dbReference>
<dbReference type="FunFam" id="2.60.15.10:FF:000002">
    <property type="entry name" value="ATP synthase epsilon chain, chloroplastic"/>
    <property type="match status" value="1"/>
</dbReference>
<dbReference type="Gene3D" id="6.10.140.480">
    <property type="match status" value="1"/>
</dbReference>
<dbReference type="Gene3D" id="2.60.15.10">
    <property type="entry name" value="F0F1 ATP synthase delta/epsilon subunit, N-terminal"/>
    <property type="match status" value="1"/>
</dbReference>
<dbReference type="HAMAP" id="MF_00530">
    <property type="entry name" value="ATP_synth_epsil_bac"/>
    <property type="match status" value="1"/>
</dbReference>
<dbReference type="InterPro" id="IPR001469">
    <property type="entry name" value="ATP_synth_F1_dsu/esu"/>
</dbReference>
<dbReference type="InterPro" id="IPR020546">
    <property type="entry name" value="ATP_synth_F1_dsu/esu_N"/>
</dbReference>
<dbReference type="InterPro" id="IPR020547">
    <property type="entry name" value="ATP_synth_F1_esu_C"/>
</dbReference>
<dbReference type="InterPro" id="IPR036771">
    <property type="entry name" value="ATPsynth_dsu/esu_N"/>
</dbReference>
<dbReference type="NCBIfam" id="TIGR01216">
    <property type="entry name" value="ATP_synt_epsi"/>
    <property type="match status" value="1"/>
</dbReference>
<dbReference type="PANTHER" id="PTHR13822">
    <property type="entry name" value="ATP SYNTHASE DELTA/EPSILON CHAIN"/>
    <property type="match status" value="1"/>
</dbReference>
<dbReference type="PANTHER" id="PTHR13822:SF10">
    <property type="entry name" value="ATP SYNTHASE EPSILON CHAIN, CHLOROPLASTIC"/>
    <property type="match status" value="1"/>
</dbReference>
<dbReference type="Pfam" id="PF00401">
    <property type="entry name" value="ATP-synt_DE"/>
    <property type="match status" value="1"/>
</dbReference>
<dbReference type="Pfam" id="PF02823">
    <property type="entry name" value="ATP-synt_DE_N"/>
    <property type="match status" value="1"/>
</dbReference>
<dbReference type="SUPFAM" id="SSF51344">
    <property type="entry name" value="Epsilon subunit of F1F0-ATP synthase N-terminal domain"/>
    <property type="match status" value="1"/>
</dbReference>
<proteinExistence type="inferred from homology"/>
<reference key="1">
    <citation type="journal article" date="2004" name="Plant Physiol.">
        <title>A comparison of rice chloroplast genomes.</title>
        <authorList>
            <person name="Tang J."/>
            <person name="Xia H."/>
            <person name="Cao M."/>
            <person name="Zhang X."/>
            <person name="Zeng W."/>
            <person name="Hu S."/>
            <person name="Tong W."/>
            <person name="Wang J."/>
            <person name="Wang J."/>
            <person name="Yu J."/>
            <person name="Yang H."/>
            <person name="Zhu L."/>
        </authorList>
    </citation>
    <scope>NUCLEOTIDE SEQUENCE [LARGE SCALE GENOMIC DNA]</scope>
    <source>
        <strain>cv. PA64s</strain>
    </source>
</reference>
<keyword id="KW-0066">ATP synthesis</keyword>
<keyword id="KW-0139">CF(1)</keyword>
<keyword id="KW-0150">Chloroplast</keyword>
<keyword id="KW-0375">Hydrogen ion transport</keyword>
<keyword id="KW-0406">Ion transport</keyword>
<keyword id="KW-0472">Membrane</keyword>
<keyword id="KW-0934">Plastid</keyword>
<keyword id="KW-0793">Thylakoid</keyword>
<keyword id="KW-0813">Transport</keyword>
<gene>
    <name evidence="1" type="primary">atpE</name>
    <name type="ORF">PA060</name>
</gene>
<accession>P0C2Z1</accession>
<accession>P12086</accession>
<accession>Q6QY05</accession>
<accession>Q6QY69</accession>
<geneLocation type="chloroplast"/>
<organism>
    <name type="scientific">Oryza sativa</name>
    <name type="common">Rice</name>
    <dbReference type="NCBI Taxonomy" id="4530"/>
    <lineage>
        <taxon>Eukaryota</taxon>
        <taxon>Viridiplantae</taxon>
        <taxon>Streptophyta</taxon>
        <taxon>Embryophyta</taxon>
        <taxon>Tracheophyta</taxon>
        <taxon>Spermatophyta</taxon>
        <taxon>Magnoliopsida</taxon>
        <taxon>Liliopsida</taxon>
        <taxon>Poales</taxon>
        <taxon>Poaceae</taxon>
        <taxon>BOP clade</taxon>
        <taxon>Oryzoideae</taxon>
        <taxon>Oryzeae</taxon>
        <taxon>Oryzinae</taxon>
        <taxon>Oryza</taxon>
    </lineage>
</organism>
<feature type="chain" id="PRO_0000188281" description="ATP synthase epsilon chain, chloroplastic">
    <location>
        <begin position="1"/>
        <end position="137"/>
    </location>
</feature>
<sequence length="137" mass="15218">MKLNLYVLTPKRIIWDCEVKEIILSTNSGQIGVLPNHAPINTAVDMGPLRIRLLNDQWLTAVLWSGFARIVNNEIIILGNDAELGSDIDPEEAQQALEIAEANVSRAEGTKELVEAKVALRRARIRVEAVNWIPPSN</sequence>
<protein>
    <recommendedName>
        <fullName evidence="1">ATP synthase epsilon chain, chloroplastic</fullName>
    </recommendedName>
    <alternativeName>
        <fullName evidence="1">ATP synthase F1 sector epsilon subunit</fullName>
    </alternativeName>
    <alternativeName>
        <fullName evidence="1">F-ATPase epsilon subunit</fullName>
    </alternativeName>
</protein>